<accession>Q9HDZ8</accession>
<protein>
    <recommendedName>
        <fullName>Uncharacterized protein C589.06c</fullName>
    </recommendedName>
</protein>
<feature type="chain" id="PRO_0000372627" description="Uncharacterized protein C589.06c">
    <location>
        <begin position="1"/>
        <end position="202"/>
    </location>
</feature>
<feature type="transmembrane region" description="Helical" evidence="1">
    <location>
        <begin position="34"/>
        <end position="54"/>
    </location>
</feature>
<feature type="transmembrane region" description="Helical" evidence="1">
    <location>
        <begin position="102"/>
        <end position="122"/>
    </location>
</feature>
<feature type="transmembrane region" description="Helical" evidence="1">
    <location>
        <begin position="125"/>
        <end position="145"/>
    </location>
</feature>
<feature type="region of interest" description="Disordered" evidence="2">
    <location>
        <begin position="165"/>
        <end position="202"/>
    </location>
</feature>
<feature type="compositionally biased region" description="Low complexity" evidence="2">
    <location>
        <begin position="168"/>
        <end position="185"/>
    </location>
</feature>
<feature type="modified residue" description="Phosphoserine" evidence="4">
    <location>
        <position position="185"/>
    </location>
</feature>
<feature type="modified residue" description="Phosphoserine" evidence="4">
    <location>
        <position position="201"/>
    </location>
</feature>
<organism>
    <name type="scientific">Schizosaccharomyces pombe (strain 972 / ATCC 24843)</name>
    <name type="common">Fission yeast</name>
    <dbReference type="NCBI Taxonomy" id="284812"/>
    <lineage>
        <taxon>Eukaryota</taxon>
        <taxon>Fungi</taxon>
        <taxon>Dikarya</taxon>
        <taxon>Ascomycota</taxon>
        <taxon>Taphrinomycotina</taxon>
        <taxon>Schizosaccharomycetes</taxon>
        <taxon>Schizosaccharomycetales</taxon>
        <taxon>Schizosaccharomycetaceae</taxon>
        <taxon>Schizosaccharomyces</taxon>
    </lineage>
</organism>
<gene>
    <name type="ORF">SPAC589.06c</name>
</gene>
<keyword id="KW-0256">Endoplasmic reticulum</keyword>
<keyword id="KW-0472">Membrane</keyword>
<keyword id="KW-0597">Phosphoprotein</keyword>
<keyword id="KW-1185">Reference proteome</keyword>
<keyword id="KW-0812">Transmembrane</keyword>
<keyword id="KW-1133">Transmembrane helix</keyword>
<name>YKP6_SCHPO</name>
<comment type="subcellular location">
    <subcellularLocation>
        <location evidence="3">Endoplasmic reticulum membrane</location>
        <topology evidence="3">Multi-pass membrane protein</topology>
    </subcellularLocation>
</comment>
<comment type="similarity">
    <text evidence="5">Belongs to the PHO88 family.</text>
</comment>
<proteinExistence type="evidence at protein level"/>
<dbReference type="EMBL" id="CU329670">
    <property type="protein sequence ID" value="CAC19763.1"/>
    <property type="molecule type" value="Genomic_DNA"/>
</dbReference>
<dbReference type="BioGRID" id="278962">
    <property type="interactions" value="2"/>
</dbReference>
<dbReference type="iPTMnet" id="Q9HDZ8"/>
<dbReference type="PaxDb" id="4896-SPAC589.06c.1"/>
<dbReference type="EnsemblFungi" id="SPAC589.06c.1">
    <property type="protein sequence ID" value="SPAC589.06c.1:pep"/>
    <property type="gene ID" value="SPAC589.06c"/>
</dbReference>
<dbReference type="KEGG" id="spo:2542504"/>
<dbReference type="PomBase" id="SPAC589.06c"/>
<dbReference type="VEuPathDB" id="FungiDB:SPAC589.06c"/>
<dbReference type="eggNOG" id="KOG4554">
    <property type="taxonomic scope" value="Eukaryota"/>
</dbReference>
<dbReference type="HOGENOM" id="CLU_099163_0_0_1"/>
<dbReference type="InParanoid" id="Q9HDZ8"/>
<dbReference type="OMA" id="ITYSEYD"/>
<dbReference type="PhylomeDB" id="Q9HDZ8"/>
<dbReference type="PRO" id="PR:Q9HDZ8"/>
<dbReference type="Proteomes" id="UP000002485">
    <property type="component" value="Chromosome I"/>
</dbReference>
<dbReference type="GO" id="GO:0005783">
    <property type="term" value="C:endoplasmic reticulum"/>
    <property type="evidence" value="ECO:0007005"/>
    <property type="project" value="PomBase"/>
</dbReference>
<dbReference type="GO" id="GO:0005789">
    <property type="term" value="C:endoplasmic reticulum membrane"/>
    <property type="evidence" value="ECO:0000266"/>
    <property type="project" value="PomBase"/>
</dbReference>
<dbReference type="GO" id="GO:0045048">
    <property type="term" value="P:protein insertion into ER membrane"/>
    <property type="evidence" value="ECO:0000266"/>
    <property type="project" value="PomBase"/>
</dbReference>
<dbReference type="GO" id="GO:0045047">
    <property type="term" value="P:protein targeting to ER"/>
    <property type="evidence" value="ECO:0000266"/>
    <property type="project" value="PomBase"/>
</dbReference>
<dbReference type="InterPro" id="IPR012098">
    <property type="entry name" value="SND3_fun"/>
</dbReference>
<dbReference type="PANTHER" id="PTHR28112:SF2">
    <property type="entry name" value="PHO88 FAMILY PROTEIN"/>
    <property type="match status" value="1"/>
</dbReference>
<dbReference type="PANTHER" id="PTHR28112">
    <property type="entry name" value="SRP-INDEPENDENT TARGETING PROTEIN 3"/>
    <property type="match status" value="1"/>
</dbReference>
<dbReference type="Pfam" id="PF10032">
    <property type="entry name" value="Pho88"/>
    <property type="match status" value="1"/>
</dbReference>
<dbReference type="PIRSF" id="PIRSF008756">
    <property type="entry name" value="P_tr_PHO88"/>
    <property type="match status" value="1"/>
</dbReference>
<reference key="1">
    <citation type="journal article" date="2002" name="Nature">
        <title>The genome sequence of Schizosaccharomyces pombe.</title>
        <authorList>
            <person name="Wood V."/>
            <person name="Gwilliam R."/>
            <person name="Rajandream M.A."/>
            <person name="Lyne M.H."/>
            <person name="Lyne R."/>
            <person name="Stewart A."/>
            <person name="Sgouros J.G."/>
            <person name="Peat N."/>
            <person name="Hayles J."/>
            <person name="Baker S.G."/>
            <person name="Basham D."/>
            <person name="Bowman S."/>
            <person name="Brooks K."/>
            <person name="Brown D."/>
            <person name="Brown S."/>
            <person name="Chillingworth T."/>
            <person name="Churcher C.M."/>
            <person name="Collins M."/>
            <person name="Connor R."/>
            <person name="Cronin A."/>
            <person name="Davis P."/>
            <person name="Feltwell T."/>
            <person name="Fraser A."/>
            <person name="Gentles S."/>
            <person name="Goble A."/>
            <person name="Hamlin N."/>
            <person name="Harris D.E."/>
            <person name="Hidalgo J."/>
            <person name="Hodgson G."/>
            <person name="Holroyd S."/>
            <person name="Hornsby T."/>
            <person name="Howarth S."/>
            <person name="Huckle E.J."/>
            <person name="Hunt S."/>
            <person name="Jagels K."/>
            <person name="James K.D."/>
            <person name="Jones L."/>
            <person name="Jones M."/>
            <person name="Leather S."/>
            <person name="McDonald S."/>
            <person name="McLean J."/>
            <person name="Mooney P."/>
            <person name="Moule S."/>
            <person name="Mungall K.L."/>
            <person name="Murphy L.D."/>
            <person name="Niblett D."/>
            <person name="Odell C."/>
            <person name="Oliver K."/>
            <person name="O'Neil S."/>
            <person name="Pearson D."/>
            <person name="Quail M.A."/>
            <person name="Rabbinowitsch E."/>
            <person name="Rutherford K.M."/>
            <person name="Rutter S."/>
            <person name="Saunders D."/>
            <person name="Seeger K."/>
            <person name="Sharp S."/>
            <person name="Skelton J."/>
            <person name="Simmonds M.N."/>
            <person name="Squares R."/>
            <person name="Squares S."/>
            <person name="Stevens K."/>
            <person name="Taylor K."/>
            <person name="Taylor R.G."/>
            <person name="Tivey A."/>
            <person name="Walsh S.V."/>
            <person name="Warren T."/>
            <person name="Whitehead S."/>
            <person name="Woodward J.R."/>
            <person name="Volckaert G."/>
            <person name="Aert R."/>
            <person name="Robben J."/>
            <person name="Grymonprez B."/>
            <person name="Weltjens I."/>
            <person name="Vanstreels E."/>
            <person name="Rieger M."/>
            <person name="Schaefer M."/>
            <person name="Mueller-Auer S."/>
            <person name="Gabel C."/>
            <person name="Fuchs M."/>
            <person name="Duesterhoeft A."/>
            <person name="Fritzc C."/>
            <person name="Holzer E."/>
            <person name="Moestl D."/>
            <person name="Hilbert H."/>
            <person name="Borzym K."/>
            <person name="Langer I."/>
            <person name="Beck A."/>
            <person name="Lehrach H."/>
            <person name="Reinhardt R."/>
            <person name="Pohl T.M."/>
            <person name="Eger P."/>
            <person name="Zimmermann W."/>
            <person name="Wedler H."/>
            <person name="Wambutt R."/>
            <person name="Purnelle B."/>
            <person name="Goffeau A."/>
            <person name="Cadieu E."/>
            <person name="Dreano S."/>
            <person name="Gloux S."/>
            <person name="Lelaure V."/>
            <person name="Mottier S."/>
            <person name="Galibert F."/>
            <person name="Aves S.J."/>
            <person name="Xiang Z."/>
            <person name="Hunt C."/>
            <person name="Moore K."/>
            <person name="Hurst S.M."/>
            <person name="Lucas M."/>
            <person name="Rochet M."/>
            <person name="Gaillardin C."/>
            <person name="Tallada V.A."/>
            <person name="Garzon A."/>
            <person name="Thode G."/>
            <person name="Daga R.R."/>
            <person name="Cruzado L."/>
            <person name="Jimenez J."/>
            <person name="Sanchez M."/>
            <person name="del Rey F."/>
            <person name="Benito J."/>
            <person name="Dominguez A."/>
            <person name="Revuelta J.L."/>
            <person name="Moreno S."/>
            <person name="Armstrong J."/>
            <person name="Forsburg S.L."/>
            <person name="Cerutti L."/>
            <person name="Lowe T."/>
            <person name="McCombie W.R."/>
            <person name="Paulsen I."/>
            <person name="Potashkin J."/>
            <person name="Shpakovski G.V."/>
            <person name="Ussery D."/>
            <person name="Barrell B.G."/>
            <person name="Nurse P."/>
        </authorList>
    </citation>
    <scope>NUCLEOTIDE SEQUENCE [LARGE SCALE GENOMIC DNA]</scope>
    <source>
        <strain>972 / ATCC 24843</strain>
    </source>
</reference>
<reference key="2">
    <citation type="journal article" date="2006" name="Nat. Biotechnol.">
        <title>ORFeome cloning and global analysis of protein localization in the fission yeast Schizosaccharomyces pombe.</title>
        <authorList>
            <person name="Matsuyama A."/>
            <person name="Arai R."/>
            <person name="Yashiroda Y."/>
            <person name="Shirai A."/>
            <person name="Kamata A."/>
            <person name="Sekido S."/>
            <person name="Kobayashi Y."/>
            <person name="Hashimoto A."/>
            <person name="Hamamoto M."/>
            <person name="Hiraoka Y."/>
            <person name="Horinouchi S."/>
            <person name="Yoshida M."/>
        </authorList>
    </citation>
    <scope>SUBCELLULAR LOCATION [LARGE SCALE ANALYSIS]</scope>
</reference>
<reference key="3">
    <citation type="journal article" date="2008" name="J. Proteome Res.">
        <title>Phosphoproteome analysis of fission yeast.</title>
        <authorList>
            <person name="Wilson-Grady J.T."/>
            <person name="Villen J."/>
            <person name="Gygi S.P."/>
        </authorList>
    </citation>
    <scope>PHOSPHORYLATION [LARGE SCALE ANALYSIS] AT SER-185 AND SER-201</scope>
    <scope>IDENTIFICATION BY MASS SPECTROMETRY</scope>
</reference>
<sequence length="202" mass="21742">MNAQVLNLVAALGVMQYSKKLDFTDPQIVYYARAAYVISNTIIFGVYAIIQARINANNDETPLVYEEPAPPFSGQSNGKLVTTTVKEYDSEQLQKAKRSTMMGVAIMAFMHLYMGYAQPLVIQSILPLISLFTNNLVSIYIFNKAAEGSLSRPFAPPAGLFGGGNKPAAAVTGTSSNSNNASAKSDGPTITELNENETEKSS</sequence>
<evidence type="ECO:0000255" key="1"/>
<evidence type="ECO:0000256" key="2">
    <source>
        <dbReference type="SAM" id="MobiDB-lite"/>
    </source>
</evidence>
<evidence type="ECO:0000269" key="3">
    <source>
    </source>
</evidence>
<evidence type="ECO:0000269" key="4">
    <source>
    </source>
</evidence>
<evidence type="ECO:0000305" key="5"/>